<reference key="1">
    <citation type="journal article" date="2011" name="Genome Biol.">
        <title>Comparative and functional genomics provide insights into the pathogenicity of dermatophytic fungi.</title>
        <authorList>
            <person name="Burmester A."/>
            <person name="Shelest E."/>
            <person name="Gloeckner G."/>
            <person name="Heddergott C."/>
            <person name="Schindler S."/>
            <person name="Staib P."/>
            <person name="Heidel A."/>
            <person name="Felder M."/>
            <person name="Petzold A."/>
            <person name="Szafranski K."/>
            <person name="Feuermann M."/>
            <person name="Pedruzzi I."/>
            <person name="Priebe S."/>
            <person name="Groth M."/>
            <person name="Winkler R."/>
            <person name="Li W."/>
            <person name="Kniemeyer O."/>
            <person name="Schroeckh V."/>
            <person name="Hertweck C."/>
            <person name="Hube B."/>
            <person name="White T.C."/>
            <person name="Platzer M."/>
            <person name="Guthke R."/>
            <person name="Heitman J."/>
            <person name="Woestemeyer J."/>
            <person name="Zipfel P.F."/>
            <person name="Monod M."/>
            <person name="Brakhage A.A."/>
        </authorList>
    </citation>
    <scope>NUCLEOTIDE SEQUENCE [LARGE SCALE GENOMIC DNA]</scope>
    <source>
        <strain>HKI 0517</strain>
    </source>
</reference>
<evidence type="ECO:0000250" key="1"/>
<evidence type="ECO:0000255" key="2">
    <source>
        <dbReference type="PROSITE-ProRule" id="PRU00227"/>
    </source>
</evidence>
<evidence type="ECO:0000256" key="3">
    <source>
        <dbReference type="SAM" id="MobiDB-lite"/>
    </source>
</evidence>
<evidence type="ECO:0000305" key="4"/>
<accession>D4D2Y6</accession>
<keyword id="KW-0010">Activator</keyword>
<keyword id="KW-0238">DNA-binding</keyword>
<keyword id="KW-0312">Gluconeogenesis</keyword>
<keyword id="KW-0479">Metal-binding</keyword>
<keyword id="KW-0539">Nucleus</keyword>
<keyword id="KW-0804">Transcription</keyword>
<keyword id="KW-0805">Transcription regulation</keyword>
<keyword id="KW-0862">Zinc</keyword>
<name>ACUK_TRIVH</name>
<dbReference type="EMBL" id="ACYE01000078">
    <property type="protein sequence ID" value="EFE43765.1"/>
    <property type="molecule type" value="Genomic_DNA"/>
</dbReference>
<dbReference type="RefSeq" id="XP_003024376.1">
    <property type="nucleotide sequence ID" value="XM_003024330.1"/>
</dbReference>
<dbReference type="SMR" id="D4D2Y6"/>
<dbReference type="GeneID" id="9579515"/>
<dbReference type="KEGG" id="tve:TRV_01442"/>
<dbReference type="HOGENOM" id="CLU_010748_1_0_1"/>
<dbReference type="OrthoDB" id="5257at34384"/>
<dbReference type="Proteomes" id="UP000008383">
    <property type="component" value="Unassembled WGS sequence"/>
</dbReference>
<dbReference type="GO" id="GO:0005634">
    <property type="term" value="C:nucleus"/>
    <property type="evidence" value="ECO:0007669"/>
    <property type="project" value="UniProtKB-SubCell"/>
</dbReference>
<dbReference type="GO" id="GO:0000981">
    <property type="term" value="F:DNA-binding transcription factor activity, RNA polymerase II-specific"/>
    <property type="evidence" value="ECO:0007669"/>
    <property type="project" value="InterPro"/>
</dbReference>
<dbReference type="GO" id="GO:0000977">
    <property type="term" value="F:RNA polymerase II transcription regulatory region sequence-specific DNA binding"/>
    <property type="evidence" value="ECO:0007669"/>
    <property type="project" value="TreeGrafter"/>
</dbReference>
<dbReference type="GO" id="GO:0008270">
    <property type="term" value="F:zinc ion binding"/>
    <property type="evidence" value="ECO:0007669"/>
    <property type="project" value="InterPro"/>
</dbReference>
<dbReference type="GO" id="GO:0009267">
    <property type="term" value="P:cellular response to starvation"/>
    <property type="evidence" value="ECO:0007669"/>
    <property type="project" value="TreeGrafter"/>
</dbReference>
<dbReference type="GO" id="GO:0006094">
    <property type="term" value="P:gluconeogenesis"/>
    <property type="evidence" value="ECO:0007669"/>
    <property type="project" value="UniProtKB-KW"/>
</dbReference>
<dbReference type="CDD" id="cd00067">
    <property type="entry name" value="GAL4"/>
    <property type="match status" value="1"/>
</dbReference>
<dbReference type="InterPro" id="IPR050335">
    <property type="entry name" value="ERT1_acuK_gluconeogen_tf"/>
</dbReference>
<dbReference type="InterPro" id="IPR056751">
    <property type="entry name" value="PAS_13"/>
</dbReference>
<dbReference type="InterPro" id="IPR036864">
    <property type="entry name" value="Zn2-C6_fun-type_DNA-bd_sf"/>
</dbReference>
<dbReference type="InterPro" id="IPR001138">
    <property type="entry name" value="Zn2Cys6_DnaBD"/>
</dbReference>
<dbReference type="PANTHER" id="PTHR47659:SF1">
    <property type="entry name" value="TRANSCRIPTION ACTIVATOR OF GLUCONEOGENESIS ERT1"/>
    <property type="match status" value="1"/>
</dbReference>
<dbReference type="PANTHER" id="PTHR47659">
    <property type="entry name" value="ZN(II)2CYS6 TRANSCRIPTION FACTOR (EUROFUNG)-RELATED"/>
    <property type="match status" value="1"/>
</dbReference>
<dbReference type="Pfam" id="PF24990">
    <property type="entry name" value="PAS_13"/>
    <property type="match status" value="1"/>
</dbReference>
<dbReference type="SMART" id="SM00066">
    <property type="entry name" value="GAL4"/>
    <property type="match status" value="1"/>
</dbReference>
<dbReference type="SUPFAM" id="SSF57701">
    <property type="entry name" value="Zn2/Cys6 DNA-binding domain"/>
    <property type="match status" value="1"/>
</dbReference>
<dbReference type="PROSITE" id="PS50048">
    <property type="entry name" value="ZN2_CY6_FUNGAL_2"/>
    <property type="match status" value="1"/>
</dbReference>
<sequence length="727" mass="78738">MSPHQTTGQESDNMTVNGENAQASSQYIQSNEEMTDTIATEKKASAAKAAKDPSRPKRKKAKRACYACQRGHLTCGDERPCQRCIKRGFQDACHDGVRKKAKYLHDAPNEALMAGVGATLYNQRNTAQNNVNASNTSPGAPQQITSPNFYNTQQSPDYNGFPQNKTELQDSTVGPDNYASQSPVSPTYQISQGLSTQGLSPSLPQSTSETPSAANPAPGQFNSTFFDPSDPALFNFDLASMNFGNHYGALEFGMLGHMATGVGDTPPSDSGAQRGSIGQNGSGTFGLTGSSFSESPSNQAPYLFSESGMNDWTQTAPVNRRSMYGSNANLVAGNMSDKPHAFAIESAPANFASPASNESPMMTTSSATFEDTTNSGAFNSRQNVPVSQQRQQPVVSTPQLKQQNLNLGSRRRHKNASSIYDSVKDPYSYTSGFHSLTAFIQRRFSPQKTLRIAKALASIRPSFIATTKTLNRDDLIFMEKCFQRTLWEYEDFINACGTPTIVCRRTGEIAAVGKEFSILTGWKKEVLLGKEPNHNVNTGGSSGLMTGSTSRGSYTPRPYSSEVYNSSATATPRTQPVFLAELLDDDSVIEFYEDFAKLAFGDSRGSVMTTCKLLKYKTKAESDILAGSNGEADAGLNGEATSNETNELNGSHTNGATTNGRGQRRWGKGEIAGEAGMNQLGFRDGKVECSYCWTVKRDVFDIPMLIVMNVSCLFLEPLRSRAMTDIN</sequence>
<comment type="function">
    <text evidence="1">Transcription factor which regulates nonfermentable carbon utilization. Activator of gluconeogenetic genes (By similarity).</text>
</comment>
<comment type="subcellular location">
    <subcellularLocation>
        <location evidence="2">Nucleus</location>
    </subcellularLocation>
</comment>
<comment type="similarity">
    <text evidence="4">Belongs to the ERT1/acuK family.</text>
</comment>
<proteinExistence type="inferred from homology"/>
<gene>
    <name type="ORF">TRV_01442</name>
</gene>
<organism>
    <name type="scientific">Trichophyton verrucosum (strain HKI 0517)</name>
    <dbReference type="NCBI Taxonomy" id="663202"/>
    <lineage>
        <taxon>Eukaryota</taxon>
        <taxon>Fungi</taxon>
        <taxon>Dikarya</taxon>
        <taxon>Ascomycota</taxon>
        <taxon>Pezizomycotina</taxon>
        <taxon>Eurotiomycetes</taxon>
        <taxon>Eurotiomycetidae</taxon>
        <taxon>Onygenales</taxon>
        <taxon>Arthrodermataceae</taxon>
        <taxon>Trichophyton</taxon>
    </lineage>
</organism>
<feature type="chain" id="PRO_0000406454" description="Transcription activator of gluconeogenesis TRV_01442">
    <location>
        <begin position="1"/>
        <end position="727"/>
    </location>
</feature>
<feature type="DNA-binding region" description="Zn(2)-C6 fungal-type" evidence="2">
    <location>
        <begin position="65"/>
        <end position="93"/>
    </location>
</feature>
<feature type="region of interest" description="Disordered" evidence="3">
    <location>
        <begin position="1"/>
        <end position="62"/>
    </location>
</feature>
<feature type="region of interest" description="Disordered" evidence="3">
    <location>
        <begin position="129"/>
        <end position="224"/>
    </location>
</feature>
<feature type="region of interest" description="Disordered" evidence="3">
    <location>
        <begin position="264"/>
        <end position="297"/>
    </location>
</feature>
<feature type="region of interest" description="Disordered" evidence="3">
    <location>
        <begin position="353"/>
        <end position="399"/>
    </location>
</feature>
<feature type="region of interest" description="Disordered" evidence="3">
    <location>
        <begin position="533"/>
        <end position="567"/>
    </location>
</feature>
<feature type="region of interest" description="Disordered" evidence="3">
    <location>
        <begin position="627"/>
        <end position="666"/>
    </location>
</feature>
<feature type="compositionally biased region" description="Polar residues" evidence="3">
    <location>
        <begin position="1"/>
        <end position="32"/>
    </location>
</feature>
<feature type="compositionally biased region" description="Basic and acidic residues" evidence="3">
    <location>
        <begin position="39"/>
        <end position="55"/>
    </location>
</feature>
<feature type="compositionally biased region" description="Polar residues" evidence="3">
    <location>
        <begin position="129"/>
        <end position="213"/>
    </location>
</feature>
<feature type="compositionally biased region" description="Polar residues" evidence="3">
    <location>
        <begin position="267"/>
        <end position="277"/>
    </location>
</feature>
<feature type="compositionally biased region" description="Polar residues" evidence="3">
    <location>
        <begin position="361"/>
        <end position="379"/>
    </location>
</feature>
<feature type="compositionally biased region" description="Low complexity" evidence="3">
    <location>
        <begin position="380"/>
        <end position="399"/>
    </location>
</feature>
<feature type="compositionally biased region" description="Low complexity" evidence="3">
    <location>
        <begin position="543"/>
        <end position="553"/>
    </location>
</feature>
<feature type="compositionally biased region" description="Polar residues" evidence="3">
    <location>
        <begin position="639"/>
        <end position="661"/>
    </location>
</feature>
<protein>
    <recommendedName>
        <fullName>Transcription activator of gluconeogenesis TRV_01442</fullName>
    </recommendedName>
</protein>